<accession>A4IL84</accession>
<gene>
    <name type="ordered locus">GTNG_0708</name>
</gene>
<proteinExistence type="inferred from homology"/>
<protein>
    <recommendedName>
        <fullName evidence="1">UPF0738 protein GTNG_0708</fullName>
    </recommendedName>
</protein>
<organism>
    <name type="scientific">Geobacillus thermodenitrificans (strain NG80-2)</name>
    <dbReference type="NCBI Taxonomy" id="420246"/>
    <lineage>
        <taxon>Bacteria</taxon>
        <taxon>Bacillati</taxon>
        <taxon>Bacillota</taxon>
        <taxon>Bacilli</taxon>
        <taxon>Bacillales</taxon>
        <taxon>Anoxybacillaceae</taxon>
        <taxon>Geobacillus</taxon>
    </lineage>
</organism>
<sequence length="125" mass="14566">MSNKVTVERAERKDGRLWLYADNVPVPLVHVTPKRHMLVDSDALAFVYILETDDRFLYVIIPKQWWPELKAAFAEGEPIWLESEGMALELEQFGEELAYLLENIRDNANYGETFEQAVQEVFFAE</sequence>
<evidence type="ECO:0000255" key="1">
    <source>
        <dbReference type="HAMAP-Rule" id="MF_01861"/>
    </source>
</evidence>
<reference key="1">
    <citation type="journal article" date="2007" name="Proc. Natl. Acad. Sci. U.S.A.">
        <title>Genome and proteome of long-chain alkane degrading Geobacillus thermodenitrificans NG80-2 isolated from a deep-subsurface oil reservoir.</title>
        <authorList>
            <person name="Feng L."/>
            <person name="Wang W."/>
            <person name="Cheng J."/>
            <person name="Ren Y."/>
            <person name="Zhao G."/>
            <person name="Gao C."/>
            <person name="Tang Y."/>
            <person name="Liu X."/>
            <person name="Han W."/>
            <person name="Peng X."/>
            <person name="Liu R."/>
            <person name="Wang L."/>
        </authorList>
    </citation>
    <scope>NUCLEOTIDE SEQUENCE [LARGE SCALE GENOMIC DNA]</scope>
    <source>
        <strain>NG80-2</strain>
    </source>
</reference>
<name>Y708_GEOTN</name>
<dbReference type="EMBL" id="CP000557">
    <property type="protein sequence ID" value="ABO66088.1"/>
    <property type="molecule type" value="Genomic_DNA"/>
</dbReference>
<dbReference type="RefSeq" id="WP_008878960.1">
    <property type="nucleotide sequence ID" value="NC_009328.1"/>
</dbReference>
<dbReference type="KEGG" id="gtn:GTNG_0708"/>
<dbReference type="eggNOG" id="ENOG5032YMN">
    <property type="taxonomic scope" value="Bacteria"/>
</dbReference>
<dbReference type="HOGENOM" id="CLU_142282_0_0_9"/>
<dbReference type="Proteomes" id="UP000001578">
    <property type="component" value="Chromosome"/>
</dbReference>
<dbReference type="HAMAP" id="MF_01861">
    <property type="entry name" value="UPF0738"/>
    <property type="match status" value="1"/>
</dbReference>
<dbReference type="InterPro" id="IPR020908">
    <property type="entry name" value="UPF0738"/>
</dbReference>
<dbReference type="Pfam" id="PF19785">
    <property type="entry name" value="UPF0738"/>
    <property type="match status" value="1"/>
</dbReference>
<feature type="chain" id="PRO_0000369655" description="UPF0738 protein GTNG_0708">
    <location>
        <begin position="1"/>
        <end position="125"/>
    </location>
</feature>
<comment type="similarity">
    <text evidence="1">Belongs to the UPF0738 family.</text>
</comment>